<reference key="1">
    <citation type="journal article" date="2008" name="DNA Res.">
        <title>The whole-genome sequencing of the obligate intracellular bacterium Orientia tsutsugamushi revealed massive gene amplification during reductive genome evolution.</title>
        <authorList>
            <person name="Nakayama K."/>
            <person name="Yamashita A."/>
            <person name="Kurokawa K."/>
            <person name="Morimoto T."/>
            <person name="Ogawa M."/>
            <person name="Fukuhara M."/>
            <person name="Urakami H."/>
            <person name="Ohnishi M."/>
            <person name="Uchiyama I."/>
            <person name="Ogura Y."/>
            <person name="Ooka T."/>
            <person name="Oshima K."/>
            <person name="Tamura A."/>
            <person name="Hattori M."/>
            <person name="Hayashi T."/>
        </authorList>
    </citation>
    <scope>NUCLEOTIDE SEQUENCE [LARGE SCALE GENOMIC DNA]</scope>
    <source>
        <strain>Ikeda</strain>
    </source>
</reference>
<evidence type="ECO:0000255" key="1">
    <source>
        <dbReference type="HAMAP-Rule" id="MF_00127"/>
    </source>
</evidence>
<comment type="catalytic activity">
    <reaction evidence="1">
        <text>tRNA(His) + L-histidine + ATP = L-histidyl-tRNA(His) + AMP + diphosphate + H(+)</text>
        <dbReference type="Rhea" id="RHEA:17313"/>
        <dbReference type="Rhea" id="RHEA-COMP:9665"/>
        <dbReference type="Rhea" id="RHEA-COMP:9689"/>
        <dbReference type="ChEBI" id="CHEBI:15378"/>
        <dbReference type="ChEBI" id="CHEBI:30616"/>
        <dbReference type="ChEBI" id="CHEBI:33019"/>
        <dbReference type="ChEBI" id="CHEBI:57595"/>
        <dbReference type="ChEBI" id="CHEBI:78442"/>
        <dbReference type="ChEBI" id="CHEBI:78527"/>
        <dbReference type="ChEBI" id="CHEBI:456215"/>
        <dbReference type="EC" id="6.1.1.21"/>
    </reaction>
</comment>
<comment type="subunit">
    <text evidence="1">Homodimer.</text>
</comment>
<comment type="subcellular location">
    <subcellularLocation>
        <location evidence="1">Cytoplasm</location>
    </subcellularLocation>
</comment>
<comment type="similarity">
    <text evidence="1">Belongs to the class-II aminoacyl-tRNA synthetase family.</text>
</comment>
<feature type="chain" id="PRO_1000095576" description="Histidine--tRNA ligase">
    <location>
        <begin position="1"/>
        <end position="423"/>
    </location>
</feature>
<organism>
    <name type="scientific">Orientia tsutsugamushi (strain Ikeda)</name>
    <name type="common">Rickettsia tsutsugamushi</name>
    <dbReference type="NCBI Taxonomy" id="334380"/>
    <lineage>
        <taxon>Bacteria</taxon>
        <taxon>Pseudomonadati</taxon>
        <taxon>Pseudomonadota</taxon>
        <taxon>Alphaproteobacteria</taxon>
        <taxon>Rickettsiales</taxon>
        <taxon>Rickettsiaceae</taxon>
        <taxon>Rickettsieae</taxon>
        <taxon>Orientia</taxon>
    </lineage>
</organism>
<gene>
    <name evidence="1" type="primary">hisS</name>
    <name type="ordered locus">OTT_1247</name>
</gene>
<keyword id="KW-0030">Aminoacyl-tRNA synthetase</keyword>
<keyword id="KW-0067">ATP-binding</keyword>
<keyword id="KW-0963">Cytoplasm</keyword>
<keyword id="KW-0436">Ligase</keyword>
<keyword id="KW-0547">Nucleotide-binding</keyword>
<keyword id="KW-0648">Protein biosynthesis</keyword>
<protein>
    <recommendedName>
        <fullName evidence="1">Histidine--tRNA ligase</fullName>
        <ecNumber evidence="1">6.1.1.21</ecNumber>
    </recommendedName>
    <alternativeName>
        <fullName evidence="1">Histidyl-tRNA synthetase</fullName>
        <shortName evidence="1">HisRS</shortName>
    </alternativeName>
</protein>
<dbReference type="EC" id="6.1.1.21" evidence="1"/>
<dbReference type="EMBL" id="AP008981">
    <property type="protein sequence ID" value="BAG40705.1"/>
    <property type="molecule type" value="Genomic_DNA"/>
</dbReference>
<dbReference type="RefSeq" id="WP_012461766.1">
    <property type="nucleotide sequence ID" value="NC_010793.1"/>
</dbReference>
<dbReference type="SMR" id="B3CTK8"/>
<dbReference type="KEGG" id="ott:OTT_1247"/>
<dbReference type="HOGENOM" id="CLU_025113_1_1_5"/>
<dbReference type="OrthoDB" id="9800814at2"/>
<dbReference type="Proteomes" id="UP000001033">
    <property type="component" value="Chromosome"/>
</dbReference>
<dbReference type="GO" id="GO:0005737">
    <property type="term" value="C:cytoplasm"/>
    <property type="evidence" value="ECO:0007669"/>
    <property type="project" value="UniProtKB-SubCell"/>
</dbReference>
<dbReference type="GO" id="GO:0005524">
    <property type="term" value="F:ATP binding"/>
    <property type="evidence" value="ECO:0007669"/>
    <property type="project" value="UniProtKB-UniRule"/>
</dbReference>
<dbReference type="GO" id="GO:0004821">
    <property type="term" value="F:histidine-tRNA ligase activity"/>
    <property type="evidence" value="ECO:0007669"/>
    <property type="project" value="UniProtKB-UniRule"/>
</dbReference>
<dbReference type="GO" id="GO:0006427">
    <property type="term" value="P:histidyl-tRNA aminoacylation"/>
    <property type="evidence" value="ECO:0007669"/>
    <property type="project" value="UniProtKB-UniRule"/>
</dbReference>
<dbReference type="CDD" id="cd00773">
    <property type="entry name" value="HisRS-like_core"/>
    <property type="match status" value="1"/>
</dbReference>
<dbReference type="Gene3D" id="3.40.50.800">
    <property type="entry name" value="Anticodon-binding domain"/>
    <property type="match status" value="1"/>
</dbReference>
<dbReference type="Gene3D" id="3.30.930.10">
    <property type="entry name" value="Bira Bifunctional Protein, Domain 2"/>
    <property type="match status" value="1"/>
</dbReference>
<dbReference type="HAMAP" id="MF_00127">
    <property type="entry name" value="His_tRNA_synth"/>
    <property type="match status" value="1"/>
</dbReference>
<dbReference type="InterPro" id="IPR006195">
    <property type="entry name" value="aa-tRNA-synth_II"/>
</dbReference>
<dbReference type="InterPro" id="IPR045864">
    <property type="entry name" value="aa-tRNA-synth_II/BPL/LPL"/>
</dbReference>
<dbReference type="InterPro" id="IPR004154">
    <property type="entry name" value="Anticodon-bd"/>
</dbReference>
<dbReference type="InterPro" id="IPR036621">
    <property type="entry name" value="Anticodon-bd_dom_sf"/>
</dbReference>
<dbReference type="InterPro" id="IPR015807">
    <property type="entry name" value="His-tRNA-ligase"/>
</dbReference>
<dbReference type="InterPro" id="IPR041715">
    <property type="entry name" value="HisRS-like_core"/>
</dbReference>
<dbReference type="InterPro" id="IPR004516">
    <property type="entry name" value="HisRS/HisZ"/>
</dbReference>
<dbReference type="NCBIfam" id="TIGR00442">
    <property type="entry name" value="hisS"/>
    <property type="match status" value="1"/>
</dbReference>
<dbReference type="PANTHER" id="PTHR43707:SF1">
    <property type="entry name" value="HISTIDINE--TRNA LIGASE, MITOCHONDRIAL-RELATED"/>
    <property type="match status" value="1"/>
</dbReference>
<dbReference type="PANTHER" id="PTHR43707">
    <property type="entry name" value="HISTIDYL-TRNA SYNTHETASE"/>
    <property type="match status" value="1"/>
</dbReference>
<dbReference type="Pfam" id="PF03129">
    <property type="entry name" value="HGTP_anticodon"/>
    <property type="match status" value="1"/>
</dbReference>
<dbReference type="Pfam" id="PF13393">
    <property type="entry name" value="tRNA-synt_His"/>
    <property type="match status" value="1"/>
</dbReference>
<dbReference type="PIRSF" id="PIRSF001549">
    <property type="entry name" value="His-tRNA_synth"/>
    <property type="match status" value="1"/>
</dbReference>
<dbReference type="SUPFAM" id="SSF52954">
    <property type="entry name" value="Class II aaRS ABD-related"/>
    <property type="match status" value="1"/>
</dbReference>
<dbReference type="SUPFAM" id="SSF55681">
    <property type="entry name" value="Class II aaRS and biotin synthetases"/>
    <property type="match status" value="1"/>
</dbReference>
<dbReference type="PROSITE" id="PS50862">
    <property type="entry name" value="AA_TRNA_LIGASE_II"/>
    <property type="match status" value="1"/>
</dbReference>
<sequence length="423" mass="48125">MSIKLQPVKGSKDLLPEEFGKHDYIVSVSRNLSQLYGFQPISTPIIEYTEIFNRTLGKDSDVLSKEMYVFLDKGNRSVSLRPEFTASIMRAVIYNNLQNKKLPLKYFSSGPAFRYDNPQAGRQRQFHQINLECIGDDSPFSDAEIVLLAHDILKTLNLVDKVNLEINSLGCMESRAKYQQALVEYFSKYRTELSQDSQSRLIENPLRILDSKNLHDKKISASAPSIHDYYTIKSRCYFDKVLEYLEFCGIKYTINANLVRGLDYYCHTVFEYTSTQIGAQSTVLGGGRYDGLFEQMGGKLASGKKTLPAIGFAAGIERLALLTNYTPVDVRPIVIIPVDEEHHQHGIMLLQKLRNNNITTVIDLQDSISKRLNRANYIKASKVIFIGAIEVREQSYRIKDLDTSNECVIIHNELLSYLQNNCS</sequence>
<name>SYH_ORITI</name>
<proteinExistence type="inferred from homology"/>
<accession>B3CTK8</accession>